<comment type="function">
    <text evidence="1">Catalyzes the reversible transfer of the terminal phosphate group between ATP and AMP. Plays an important role in cellular energy homeostasis and in adenine nucleotide metabolism.</text>
</comment>
<comment type="catalytic activity">
    <reaction evidence="1">
        <text>AMP + ATP = 2 ADP</text>
        <dbReference type="Rhea" id="RHEA:12973"/>
        <dbReference type="ChEBI" id="CHEBI:30616"/>
        <dbReference type="ChEBI" id="CHEBI:456215"/>
        <dbReference type="ChEBI" id="CHEBI:456216"/>
        <dbReference type="EC" id="2.7.4.3"/>
    </reaction>
</comment>
<comment type="pathway">
    <text evidence="1">Purine metabolism; AMP biosynthesis via salvage pathway; AMP from ADP: step 1/1.</text>
</comment>
<comment type="subunit">
    <text evidence="1">Monomer.</text>
</comment>
<comment type="subcellular location">
    <subcellularLocation>
        <location evidence="1">Cytoplasm</location>
    </subcellularLocation>
</comment>
<comment type="domain">
    <text evidence="1">Consists of three domains, a large central CORE domain and two small peripheral domains, NMPbind and LID, which undergo movements during catalysis. The LID domain closes over the site of phosphoryl transfer upon ATP binding. Assembling and dissambling the active center during each catalytic cycle provides an effective means to prevent ATP hydrolysis. Some bacteria have evolved a zinc-coordinating structure that stabilizes the LID domain.</text>
</comment>
<comment type="similarity">
    <text evidence="1">Belongs to the adenylate kinase family.</text>
</comment>
<gene>
    <name evidence="1" type="primary">adk</name>
    <name type="ordered locus">RPR_06125</name>
</gene>
<evidence type="ECO:0000255" key="1">
    <source>
        <dbReference type="HAMAP-Rule" id="MF_00235"/>
    </source>
</evidence>
<organism>
    <name type="scientific">Rickettsia peacockii (strain Rustic)</name>
    <dbReference type="NCBI Taxonomy" id="562019"/>
    <lineage>
        <taxon>Bacteria</taxon>
        <taxon>Pseudomonadati</taxon>
        <taxon>Pseudomonadota</taxon>
        <taxon>Alphaproteobacteria</taxon>
        <taxon>Rickettsiales</taxon>
        <taxon>Rickettsiaceae</taxon>
        <taxon>Rickettsieae</taxon>
        <taxon>Rickettsia</taxon>
        <taxon>spotted fever group</taxon>
    </lineage>
</organism>
<sequence>MIVIFLGPPGAGKGTQGKKIAKKIDLPHIAIGDIFRTIIKTSTSEAELINNYVRQGELIPNEIVNQVIKNFLLSSEYKNGYILDGYPRNLEQAKFFESFIKEKIKIIYFDVSGELLIKRILGRYSCKNCGKIYNRYFLQPKTDNVCDVCGSSTFDYRKDDNEEVIKKRIEVYKTETYPLIDYYKNSGNFYIVNGSKNEQEIEIDIQKILKIN</sequence>
<proteinExistence type="inferred from homology"/>
<reference key="1">
    <citation type="journal article" date="2009" name="PLoS ONE">
        <title>Genome sequence of the endosymbiont Rickettsia peacockii and comparison with virulent Rickettsia rickettsii: identification of virulence factors.</title>
        <authorList>
            <person name="Felsheim R.F."/>
            <person name="Kurtti T.J."/>
            <person name="Munderloh U.G."/>
        </authorList>
    </citation>
    <scope>NUCLEOTIDE SEQUENCE [LARGE SCALE GENOMIC DNA]</scope>
    <source>
        <strain>Rustic</strain>
    </source>
</reference>
<accession>C4K2F8</accession>
<protein>
    <recommendedName>
        <fullName evidence="1">Adenylate kinase</fullName>
        <shortName evidence="1">AK</shortName>
        <ecNumber evidence="1">2.7.4.3</ecNumber>
    </recommendedName>
    <alternativeName>
        <fullName evidence="1">ATP-AMP transphosphorylase</fullName>
    </alternativeName>
    <alternativeName>
        <fullName evidence="1">ATP:AMP phosphotransferase</fullName>
    </alternativeName>
    <alternativeName>
        <fullName evidence="1">Adenylate monophosphate kinase</fullName>
    </alternativeName>
</protein>
<feature type="chain" id="PRO_1000204426" description="Adenylate kinase">
    <location>
        <begin position="1"/>
        <end position="212"/>
    </location>
</feature>
<feature type="region of interest" description="NMP" evidence="1">
    <location>
        <begin position="30"/>
        <end position="59"/>
    </location>
</feature>
<feature type="region of interest" description="LID" evidence="1">
    <location>
        <begin position="122"/>
        <end position="160"/>
    </location>
</feature>
<feature type="binding site" evidence="1">
    <location>
        <begin position="10"/>
        <end position="15"/>
    </location>
    <ligand>
        <name>ATP</name>
        <dbReference type="ChEBI" id="CHEBI:30616"/>
    </ligand>
</feature>
<feature type="binding site" evidence="1">
    <location>
        <position position="36"/>
    </location>
    <ligand>
        <name>AMP</name>
        <dbReference type="ChEBI" id="CHEBI:456215"/>
    </ligand>
</feature>
<feature type="binding site" evidence="1">
    <location>
        <begin position="57"/>
        <end position="59"/>
    </location>
    <ligand>
        <name>AMP</name>
        <dbReference type="ChEBI" id="CHEBI:456215"/>
    </ligand>
</feature>
<feature type="binding site" evidence="1">
    <location>
        <begin position="85"/>
        <end position="88"/>
    </location>
    <ligand>
        <name>AMP</name>
        <dbReference type="ChEBI" id="CHEBI:456215"/>
    </ligand>
</feature>
<feature type="binding site" evidence="1">
    <location>
        <position position="92"/>
    </location>
    <ligand>
        <name>AMP</name>
        <dbReference type="ChEBI" id="CHEBI:456215"/>
    </ligand>
</feature>
<feature type="binding site" evidence="1">
    <location>
        <position position="123"/>
    </location>
    <ligand>
        <name>ATP</name>
        <dbReference type="ChEBI" id="CHEBI:30616"/>
    </ligand>
</feature>
<feature type="binding site" evidence="1">
    <location>
        <position position="126"/>
    </location>
    <ligand>
        <name>Zn(2+)</name>
        <dbReference type="ChEBI" id="CHEBI:29105"/>
        <note>structural</note>
    </ligand>
</feature>
<feature type="binding site" evidence="1">
    <location>
        <position position="129"/>
    </location>
    <ligand>
        <name>Zn(2+)</name>
        <dbReference type="ChEBI" id="CHEBI:29105"/>
        <note>structural</note>
    </ligand>
</feature>
<feature type="binding site" evidence="1">
    <location>
        <begin position="132"/>
        <end position="133"/>
    </location>
    <ligand>
        <name>ATP</name>
        <dbReference type="ChEBI" id="CHEBI:30616"/>
    </ligand>
</feature>
<feature type="binding site" evidence="1">
    <location>
        <position position="146"/>
    </location>
    <ligand>
        <name>Zn(2+)</name>
        <dbReference type="ChEBI" id="CHEBI:29105"/>
        <note>structural</note>
    </ligand>
</feature>
<feature type="binding site" evidence="1">
    <location>
        <position position="149"/>
    </location>
    <ligand>
        <name>Zn(2+)</name>
        <dbReference type="ChEBI" id="CHEBI:29105"/>
        <note>structural</note>
    </ligand>
</feature>
<feature type="binding site" evidence="1">
    <location>
        <position position="157"/>
    </location>
    <ligand>
        <name>AMP</name>
        <dbReference type="ChEBI" id="CHEBI:456215"/>
    </ligand>
</feature>
<feature type="binding site" evidence="1">
    <location>
        <position position="168"/>
    </location>
    <ligand>
        <name>AMP</name>
        <dbReference type="ChEBI" id="CHEBI:456215"/>
    </ligand>
</feature>
<feature type="binding site" evidence="1">
    <location>
        <position position="196"/>
    </location>
    <ligand>
        <name>ATP</name>
        <dbReference type="ChEBI" id="CHEBI:30616"/>
    </ligand>
</feature>
<keyword id="KW-0067">ATP-binding</keyword>
<keyword id="KW-0963">Cytoplasm</keyword>
<keyword id="KW-0418">Kinase</keyword>
<keyword id="KW-0479">Metal-binding</keyword>
<keyword id="KW-0545">Nucleotide biosynthesis</keyword>
<keyword id="KW-0547">Nucleotide-binding</keyword>
<keyword id="KW-0808">Transferase</keyword>
<keyword id="KW-0862">Zinc</keyword>
<name>KAD_RICPU</name>
<dbReference type="EC" id="2.7.4.3" evidence="1"/>
<dbReference type="EMBL" id="CP001227">
    <property type="protein sequence ID" value="ACR47755.1"/>
    <property type="molecule type" value="Genomic_DNA"/>
</dbReference>
<dbReference type="RefSeq" id="WP_012736936.1">
    <property type="nucleotide sequence ID" value="NC_012730.1"/>
</dbReference>
<dbReference type="SMR" id="C4K2F8"/>
<dbReference type="KEGG" id="rpk:RPR_06125"/>
<dbReference type="HOGENOM" id="CLU_032354_1_2_5"/>
<dbReference type="UniPathway" id="UPA00588">
    <property type="reaction ID" value="UER00649"/>
</dbReference>
<dbReference type="Proteomes" id="UP000005015">
    <property type="component" value="Chromosome"/>
</dbReference>
<dbReference type="GO" id="GO:0005737">
    <property type="term" value="C:cytoplasm"/>
    <property type="evidence" value="ECO:0007669"/>
    <property type="project" value="UniProtKB-SubCell"/>
</dbReference>
<dbReference type="GO" id="GO:0004017">
    <property type="term" value="F:adenylate kinase activity"/>
    <property type="evidence" value="ECO:0007669"/>
    <property type="project" value="UniProtKB-UniRule"/>
</dbReference>
<dbReference type="GO" id="GO:0005524">
    <property type="term" value="F:ATP binding"/>
    <property type="evidence" value="ECO:0007669"/>
    <property type="project" value="UniProtKB-UniRule"/>
</dbReference>
<dbReference type="GO" id="GO:0008270">
    <property type="term" value="F:zinc ion binding"/>
    <property type="evidence" value="ECO:0007669"/>
    <property type="project" value="UniProtKB-UniRule"/>
</dbReference>
<dbReference type="GO" id="GO:0044209">
    <property type="term" value="P:AMP salvage"/>
    <property type="evidence" value="ECO:0007669"/>
    <property type="project" value="UniProtKB-UniRule"/>
</dbReference>
<dbReference type="CDD" id="cd01428">
    <property type="entry name" value="ADK"/>
    <property type="match status" value="1"/>
</dbReference>
<dbReference type="Gene3D" id="3.40.50.300">
    <property type="entry name" value="P-loop containing nucleotide triphosphate hydrolases"/>
    <property type="match status" value="1"/>
</dbReference>
<dbReference type="HAMAP" id="MF_00235">
    <property type="entry name" value="Adenylate_kinase_Adk"/>
    <property type="match status" value="1"/>
</dbReference>
<dbReference type="InterPro" id="IPR006259">
    <property type="entry name" value="Adenyl_kin_sub"/>
</dbReference>
<dbReference type="InterPro" id="IPR000850">
    <property type="entry name" value="Adenylat/UMP-CMP_kin"/>
</dbReference>
<dbReference type="InterPro" id="IPR033690">
    <property type="entry name" value="Adenylat_kinase_CS"/>
</dbReference>
<dbReference type="InterPro" id="IPR007862">
    <property type="entry name" value="Adenylate_kinase_lid-dom"/>
</dbReference>
<dbReference type="InterPro" id="IPR027417">
    <property type="entry name" value="P-loop_NTPase"/>
</dbReference>
<dbReference type="NCBIfam" id="TIGR01351">
    <property type="entry name" value="adk"/>
    <property type="match status" value="1"/>
</dbReference>
<dbReference type="NCBIfam" id="NF001383">
    <property type="entry name" value="PRK00279.2-1"/>
    <property type="match status" value="1"/>
</dbReference>
<dbReference type="PANTHER" id="PTHR23359">
    <property type="entry name" value="NUCLEOTIDE KINASE"/>
    <property type="match status" value="1"/>
</dbReference>
<dbReference type="Pfam" id="PF00406">
    <property type="entry name" value="ADK"/>
    <property type="match status" value="1"/>
</dbReference>
<dbReference type="Pfam" id="PF05191">
    <property type="entry name" value="ADK_lid"/>
    <property type="match status" value="1"/>
</dbReference>
<dbReference type="PRINTS" id="PR00094">
    <property type="entry name" value="ADENYLTKNASE"/>
</dbReference>
<dbReference type="SUPFAM" id="SSF52540">
    <property type="entry name" value="P-loop containing nucleoside triphosphate hydrolases"/>
    <property type="match status" value="1"/>
</dbReference>
<dbReference type="PROSITE" id="PS00113">
    <property type="entry name" value="ADENYLATE_KINASE"/>
    <property type="match status" value="1"/>
</dbReference>